<name>IF3_PARD8</name>
<proteinExistence type="inferred from homology"/>
<dbReference type="EMBL" id="CP000140">
    <property type="protein sequence ID" value="ABR42437.1"/>
    <property type="molecule type" value="Genomic_DNA"/>
</dbReference>
<dbReference type="RefSeq" id="WP_008779711.1">
    <property type="nucleotide sequence ID" value="NC_009615.1"/>
</dbReference>
<dbReference type="SMR" id="A6L9S3"/>
<dbReference type="STRING" id="435591.BDI_0661"/>
<dbReference type="PaxDb" id="435591-BDI_0661"/>
<dbReference type="KEGG" id="pdi:BDI_0661"/>
<dbReference type="eggNOG" id="COG0290">
    <property type="taxonomic scope" value="Bacteria"/>
</dbReference>
<dbReference type="HOGENOM" id="CLU_054919_3_0_10"/>
<dbReference type="BioCyc" id="PDIS435591:G1G5A-678-MONOMER"/>
<dbReference type="Proteomes" id="UP000000566">
    <property type="component" value="Chromosome"/>
</dbReference>
<dbReference type="GO" id="GO:0005829">
    <property type="term" value="C:cytosol"/>
    <property type="evidence" value="ECO:0007669"/>
    <property type="project" value="TreeGrafter"/>
</dbReference>
<dbReference type="GO" id="GO:0016020">
    <property type="term" value="C:membrane"/>
    <property type="evidence" value="ECO:0007669"/>
    <property type="project" value="TreeGrafter"/>
</dbReference>
<dbReference type="GO" id="GO:0043022">
    <property type="term" value="F:ribosome binding"/>
    <property type="evidence" value="ECO:0007669"/>
    <property type="project" value="TreeGrafter"/>
</dbReference>
<dbReference type="GO" id="GO:0003743">
    <property type="term" value="F:translation initiation factor activity"/>
    <property type="evidence" value="ECO:0007669"/>
    <property type="project" value="UniProtKB-UniRule"/>
</dbReference>
<dbReference type="GO" id="GO:0032790">
    <property type="term" value="P:ribosome disassembly"/>
    <property type="evidence" value="ECO:0007669"/>
    <property type="project" value="TreeGrafter"/>
</dbReference>
<dbReference type="FunFam" id="3.10.20.80:FF:000001">
    <property type="entry name" value="Translation initiation factor IF-3"/>
    <property type="match status" value="1"/>
</dbReference>
<dbReference type="FunFam" id="3.30.110.10:FF:000001">
    <property type="entry name" value="Translation initiation factor IF-3"/>
    <property type="match status" value="1"/>
</dbReference>
<dbReference type="Gene3D" id="3.30.110.10">
    <property type="entry name" value="Translation initiation factor 3 (IF-3), C-terminal domain"/>
    <property type="match status" value="1"/>
</dbReference>
<dbReference type="Gene3D" id="3.10.20.80">
    <property type="entry name" value="Translation initiation factor 3 (IF-3), N-terminal domain"/>
    <property type="match status" value="1"/>
</dbReference>
<dbReference type="HAMAP" id="MF_00080">
    <property type="entry name" value="IF_3"/>
    <property type="match status" value="1"/>
</dbReference>
<dbReference type="InterPro" id="IPR036788">
    <property type="entry name" value="T_IF-3_C_sf"/>
</dbReference>
<dbReference type="InterPro" id="IPR036787">
    <property type="entry name" value="T_IF-3_N_sf"/>
</dbReference>
<dbReference type="InterPro" id="IPR001288">
    <property type="entry name" value="Translation_initiation_fac_3"/>
</dbReference>
<dbReference type="InterPro" id="IPR019815">
    <property type="entry name" value="Translation_initiation_fac_3_C"/>
</dbReference>
<dbReference type="InterPro" id="IPR019814">
    <property type="entry name" value="Translation_initiation_fac_3_N"/>
</dbReference>
<dbReference type="NCBIfam" id="TIGR00168">
    <property type="entry name" value="infC"/>
    <property type="match status" value="1"/>
</dbReference>
<dbReference type="PANTHER" id="PTHR10938">
    <property type="entry name" value="TRANSLATION INITIATION FACTOR IF-3"/>
    <property type="match status" value="1"/>
</dbReference>
<dbReference type="PANTHER" id="PTHR10938:SF0">
    <property type="entry name" value="TRANSLATION INITIATION FACTOR IF-3, MITOCHONDRIAL"/>
    <property type="match status" value="1"/>
</dbReference>
<dbReference type="Pfam" id="PF00707">
    <property type="entry name" value="IF3_C"/>
    <property type="match status" value="1"/>
</dbReference>
<dbReference type="Pfam" id="PF05198">
    <property type="entry name" value="IF3_N"/>
    <property type="match status" value="1"/>
</dbReference>
<dbReference type="SUPFAM" id="SSF55200">
    <property type="entry name" value="Translation initiation factor IF3, C-terminal domain"/>
    <property type="match status" value="1"/>
</dbReference>
<dbReference type="SUPFAM" id="SSF54364">
    <property type="entry name" value="Translation initiation factor IF3, N-terminal domain"/>
    <property type="match status" value="1"/>
</dbReference>
<protein>
    <recommendedName>
        <fullName evidence="1">Translation initiation factor IF-3</fullName>
    </recommendedName>
</protein>
<evidence type="ECO:0000255" key="1">
    <source>
        <dbReference type="HAMAP-Rule" id="MF_00080"/>
    </source>
</evidence>
<gene>
    <name evidence="1" type="primary">infC</name>
    <name type="ordered locus">BDI_0661</name>
</gene>
<comment type="function">
    <text evidence="1">IF-3 binds to the 30S ribosomal subunit and shifts the equilibrium between 70S ribosomes and their 50S and 30S subunits in favor of the free subunits, thus enhancing the availability of 30S subunits on which protein synthesis initiation begins.</text>
</comment>
<comment type="subunit">
    <text evidence="1">Monomer.</text>
</comment>
<comment type="subcellular location">
    <subcellularLocation>
        <location evidence="1">Cytoplasm</location>
    </subcellularLocation>
</comment>
<comment type="similarity">
    <text evidence="1">Belongs to the IF-3 family.</text>
</comment>
<reference key="1">
    <citation type="journal article" date="2007" name="PLoS Biol.">
        <title>Evolution of symbiotic bacteria in the distal human intestine.</title>
        <authorList>
            <person name="Xu J."/>
            <person name="Mahowald M.A."/>
            <person name="Ley R.E."/>
            <person name="Lozupone C.A."/>
            <person name="Hamady M."/>
            <person name="Martens E.C."/>
            <person name="Henrissat B."/>
            <person name="Coutinho P.M."/>
            <person name="Minx P."/>
            <person name="Latreille P."/>
            <person name="Cordum H."/>
            <person name="Van Brunt A."/>
            <person name="Kim K."/>
            <person name="Fulton R.S."/>
            <person name="Fulton L.A."/>
            <person name="Clifton S.W."/>
            <person name="Wilson R.K."/>
            <person name="Knight R.D."/>
            <person name="Gordon J.I."/>
        </authorList>
    </citation>
    <scope>NUCLEOTIDE SEQUENCE [LARGE SCALE GENOMIC DNA]</scope>
    <source>
        <strain>ATCC 8503 / DSM 20701 / CIP 104284 / JCM 5825 / NCTC 11152</strain>
    </source>
</reference>
<keyword id="KW-0963">Cytoplasm</keyword>
<keyword id="KW-0396">Initiation factor</keyword>
<keyword id="KW-0648">Protein biosynthesis</keyword>
<keyword id="KW-1185">Reference proteome</keyword>
<accession>A6L9S3</accession>
<organism>
    <name type="scientific">Parabacteroides distasonis (strain ATCC 8503 / DSM 20701 / CIP 104284 / JCM 5825 / NCTC 11152)</name>
    <dbReference type="NCBI Taxonomy" id="435591"/>
    <lineage>
        <taxon>Bacteria</taxon>
        <taxon>Pseudomonadati</taxon>
        <taxon>Bacteroidota</taxon>
        <taxon>Bacteroidia</taxon>
        <taxon>Bacteroidales</taxon>
        <taxon>Tannerellaceae</taxon>
        <taxon>Parabacteroides</taxon>
    </lineage>
</organism>
<sequence length="208" mass="23603">MKNDNLKEQYRINERIRVREVRLVGDNIETGVYPIAQALKIAEEQGMDLVEISPNAAPPVCRVIDYQKFLYQQKKRQKEQKAKSVKVVVKEIRFGPQTDDHDYNFKLKHAKGFLEEGSKVKAYVFFKGRSILFKEQGEVLLLRFANDLEDYGKVEQLPVLEGKRMIIMLTPKKAGTGSAPAAAAAPKVVKKVITTPKPKSEGDKKTEE</sequence>
<feature type="chain" id="PRO_1000004550" description="Translation initiation factor IF-3">
    <location>
        <begin position="1"/>
        <end position="208"/>
    </location>
</feature>